<name>ARGR_CORGL</name>
<reference key="1">
    <citation type="submission" date="1998-02" db="EMBL/GenBank/DDBJ databases">
        <title>Molecular cloning of the arginine biosynthetic genes from Corynebacterium glutamicum.</title>
        <authorList>
            <person name="Park M.Y."/>
            <person name="Chun J.Y."/>
            <person name="Ko S.-Y."/>
            <person name="Lee M.-S."/>
        </authorList>
    </citation>
    <scope>NUCLEOTIDE SEQUENCE [GENOMIC DNA]</scope>
    <source>
        <strain>ATCC 13059 / LMG 3658 / NCIB 10332 / AS019 / 613</strain>
    </source>
</reference>
<reference key="2">
    <citation type="submission" date="1998-01" db="EMBL/GenBank/DDBJ databases">
        <title>The argR gene of Corynebacterium glutamicum.</title>
        <authorList>
            <person name="Ko S.-Y."/>
            <person name="Lee M.-S."/>
        </authorList>
    </citation>
    <scope>NUCLEOTIDE SEQUENCE [GENOMIC DNA]</scope>
    <source>
        <strain>ATCC 13059 / LMG 3658 / NCIB 10332 / AS019 / 613</strain>
    </source>
</reference>
<reference key="3">
    <citation type="journal article" date="2003" name="Appl. Microbiol. Biotechnol.">
        <title>The Corynebacterium glutamicum genome: features and impacts on biotechnological processes.</title>
        <authorList>
            <person name="Ikeda M."/>
            <person name="Nakagawa S."/>
        </authorList>
    </citation>
    <scope>NUCLEOTIDE SEQUENCE [LARGE SCALE GENOMIC DNA]</scope>
    <source>
        <strain>ATCC 13032 / DSM 20300 / JCM 1318 / BCRC 11384 / CCUG 27702 / LMG 3730 / NBRC 12168 / NCIMB 10025 / NRRL B-2784 / 534</strain>
    </source>
</reference>
<reference key="4">
    <citation type="journal article" date="2003" name="J. Biotechnol.">
        <title>The complete Corynebacterium glutamicum ATCC 13032 genome sequence and its impact on the production of L-aspartate-derived amino acids and vitamins.</title>
        <authorList>
            <person name="Kalinowski J."/>
            <person name="Bathe B."/>
            <person name="Bartels D."/>
            <person name="Bischoff N."/>
            <person name="Bott M."/>
            <person name="Burkovski A."/>
            <person name="Dusch N."/>
            <person name="Eggeling L."/>
            <person name="Eikmanns B.J."/>
            <person name="Gaigalat L."/>
            <person name="Goesmann A."/>
            <person name="Hartmann M."/>
            <person name="Huthmacher K."/>
            <person name="Kraemer R."/>
            <person name="Linke B."/>
            <person name="McHardy A.C."/>
            <person name="Meyer F."/>
            <person name="Moeckel B."/>
            <person name="Pfefferle W."/>
            <person name="Puehler A."/>
            <person name="Rey D.A."/>
            <person name="Rueckert C."/>
            <person name="Rupp O."/>
            <person name="Sahm H."/>
            <person name="Wendisch V.F."/>
            <person name="Wiegraebe I."/>
            <person name="Tauch A."/>
        </authorList>
    </citation>
    <scope>NUCLEOTIDE SEQUENCE [LARGE SCALE GENOMIC DNA]</scope>
    <source>
        <strain>ATCC 13032 / DSM 20300 / JCM 1318 / BCRC 11384 / CCUG 27702 / LMG 3730 / NBRC 12168 / NCIMB 10025 / NRRL B-2784 / 534</strain>
    </source>
</reference>
<keyword id="KW-0963">Cytoplasm</keyword>
<keyword id="KW-0238">DNA-binding</keyword>
<keyword id="KW-1185">Reference proteome</keyword>
<keyword id="KW-0678">Repressor</keyword>
<keyword id="KW-0804">Transcription</keyword>
<keyword id="KW-0805">Transcription regulation</keyword>
<organism>
    <name type="scientific">Corynebacterium glutamicum (strain ATCC 13032 / DSM 20300 / JCM 1318 / BCRC 11384 / CCUG 27702 / LMG 3730 / NBRC 12168 / NCIMB 10025 / NRRL B-2784 / 534)</name>
    <dbReference type="NCBI Taxonomy" id="196627"/>
    <lineage>
        <taxon>Bacteria</taxon>
        <taxon>Bacillati</taxon>
        <taxon>Actinomycetota</taxon>
        <taxon>Actinomycetes</taxon>
        <taxon>Mycobacteriales</taxon>
        <taxon>Corynebacteriaceae</taxon>
        <taxon>Corynebacterium</taxon>
    </lineage>
</organism>
<evidence type="ECO:0000250" key="1"/>
<evidence type="ECO:0000305" key="2"/>
<dbReference type="EMBL" id="AF049897">
    <property type="protein sequence ID" value="AAC24817.1"/>
    <property type="molecule type" value="Genomic_DNA"/>
</dbReference>
<dbReference type="EMBL" id="AF041436">
    <property type="protein sequence ID" value="AAD02198.1"/>
    <property type="molecule type" value="Genomic_DNA"/>
</dbReference>
<dbReference type="EMBL" id="BA000036">
    <property type="protein sequence ID" value="BAB98792.1"/>
    <property type="molecule type" value="Genomic_DNA"/>
</dbReference>
<dbReference type="EMBL" id="BX927152">
    <property type="protein sequence ID" value="CAF21410.1"/>
    <property type="molecule type" value="Genomic_DNA"/>
</dbReference>
<dbReference type="RefSeq" id="NP_600618.1">
    <property type="nucleotide sequence ID" value="NC_003450.3"/>
</dbReference>
<dbReference type="RefSeq" id="WP_003858683.1">
    <property type="nucleotide sequence ID" value="NC_006958.1"/>
</dbReference>
<dbReference type="SMR" id="O85175"/>
<dbReference type="STRING" id="196627.cg1585"/>
<dbReference type="KEGG" id="cgb:cg1585"/>
<dbReference type="KEGG" id="cgl:Cgl1399"/>
<dbReference type="PATRIC" id="fig|196627.13.peg.1368"/>
<dbReference type="eggNOG" id="COG1438">
    <property type="taxonomic scope" value="Bacteria"/>
</dbReference>
<dbReference type="HOGENOM" id="CLU_097103_1_1_11"/>
<dbReference type="OrthoDB" id="7060358at2"/>
<dbReference type="BioCyc" id="CORYNE:G18NG-10978-MONOMER"/>
<dbReference type="UniPathway" id="UPA00068"/>
<dbReference type="Proteomes" id="UP000000582">
    <property type="component" value="Chromosome"/>
</dbReference>
<dbReference type="Proteomes" id="UP000001009">
    <property type="component" value="Chromosome"/>
</dbReference>
<dbReference type="CollecTF" id="EXPREG_000006c0"/>
<dbReference type="GO" id="GO:0005737">
    <property type="term" value="C:cytoplasm"/>
    <property type="evidence" value="ECO:0007669"/>
    <property type="project" value="UniProtKB-SubCell"/>
</dbReference>
<dbReference type="GO" id="GO:0032993">
    <property type="term" value="C:protein-DNA complex"/>
    <property type="evidence" value="ECO:0000315"/>
    <property type="project" value="CollecTF"/>
</dbReference>
<dbReference type="GO" id="GO:0034618">
    <property type="term" value="F:arginine binding"/>
    <property type="evidence" value="ECO:0007669"/>
    <property type="project" value="InterPro"/>
</dbReference>
<dbReference type="GO" id="GO:0001216">
    <property type="term" value="F:DNA-binding transcription activator activity"/>
    <property type="evidence" value="ECO:0000315"/>
    <property type="project" value="CollecTF"/>
</dbReference>
<dbReference type="GO" id="GO:0000976">
    <property type="term" value="F:transcription cis-regulatory region binding"/>
    <property type="evidence" value="ECO:0000315"/>
    <property type="project" value="CollecTF"/>
</dbReference>
<dbReference type="GO" id="GO:0006526">
    <property type="term" value="P:L-arginine biosynthetic process"/>
    <property type="evidence" value="ECO:0007669"/>
    <property type="project" value="UniProtKB-UniPathway"/>
</dbReference>
<dbReference type="GO" id="GO:0045893">
    <property type="term" value="P:positive regulation of DNA-templated transcription"/>
    <property type="evidence" value="ECO:0000269"/>
    <property type="project" value="CollecTF"/>
</dbReference>
<dbReference type="GO" id="GO:0051259">
    <property type="term" value="P:protein complex oligomerization"/>
    <property type="evidence" value="ECO:0007669"/>
    <property type="project" value="InterPro"/>
</dbReference>
<dbReference type="GO" id="GO:1900079">
    <property type="term" value="P:regulation of arginine biosynthetic process"/>
    <property type="evidence" value="ECO:0007669"/>
    <property type="project" value="UniProtKB-UniRule"/>
</dbReference>
<dbReference type="Gene3D" id="3.30.1360.40">
    <property type="match status" value="1"/>
</dbReference>
<dbReference type="Gene3D" id="1.10.10.10">
    <property type="entry name" value="Winged helix-like DNA-binding domain superfamily/Winged helix DNA-binding domain"/>
    <property type="match status" value="1"/>
</dbReference>
<dbReference type="HAMAP" id="MF_00173">
    <property type="entry name" value="Arg_repressor"/>
    <property type="match status" value="1"/>
</dbReference>
<dbReference type="InterPro" id="IPR001669">
    <property type="entry name" value="Arg_repress"/>
</dbReference>
<dbReference type="InterPro" id="IPR020899">
    <property type="entry name" value="Arg_repress_C"/>
</dbReference>
<dbReference type="InterPro" id="IPR036251">
    <property type="entry name" value="Arg_repress_C_sf"/>
</dbReference>
<dbReference type="InterPro" id="IPR020900">
    <property type="entry name" value="Arg_repress_DNA-bd"/>
</dbReference>
<dbReference type="InterPro" id="IPR036388">
    <property type="entry name" value="WH-like_DNA-bd_sf"/>
</dbReference>
<dbReference type="InterPro" id="IPR036390">
    <property type="entry name" value="WH_DNA-bd_sf"/>
</dbReference>
<dbReference type="NCBIfam" id="TIGR01529">
    <property type="entry name" value="argR_whole"/>
    <property type="match status" value="1"/>
</dbReference>
<dbReference type="NCBIfam" id="NF002880">
    <property type="entry name" value="PRK03341.1"/>
    <property type="match status" value="1"/>
</dbReference>
<dbReference type="PANTHER" id="PTHR34471">
    <property type="entry name" value="ARGININE REPRESSOR"/>
    <property type="match status" value="1"/>
</dbReference>
<dbReference type="PANTHER" id="PTHR34471:SF1">
    <property type="entry name" value="ARGININE REPRESSOR"/>
    <property type="match status" value="1"/>
</dbReference>
<dbReference type="Pfam" id="PF01316">
    <property type="entry name" value="Arg_repressor"/>
    <property type="match status" value="1"/>
</dbReference>
<dbReference type="Pfam" id="PF02863">
    <property type="entry name" value="Arg_repressor_C"/>
    <property type="match status" value="1"/>
</dbReference>
<dbReference type="PRINTS" id="PR01467">
    <property type="entry name" value="ARGREPRESSOR"/>
</dbReference>
<dbReference type="SUPFAM" id="SSF55252">
    <property type="entry name" value="C-terminal domain of arginine repressor"/>
    <property type="match status" value="1"/>
</dbReference>
<dbReference type="SUPFAM" id="SSF46785">
    <property type="entry name" value="Winged helix' DNA-binding domain"/>
    <property type="match status" value="1"/>
</dbReference>
<proteinExistence type="inferred from homology"/>
<feature type="chain" id="PRO_0000205084" description="Arginine repressor">
    <location>
        <begin position="1"/>
        <end position="171"/>
    </location>
</feature>
<feature type="sequence conflict" description="In Ref. 1; AAC24817." evidence="2" ref="1">
    <original>E</original>
    <variation>Q</variation>
    <location>
        <position position="138"/>
    </location>
</feature>
<sequence length="171" mass="18468">MSLGSTPSTPENLNPVTRTARQALILQILDKQKVTSQVQLSELLLDEGIDITQATLSRDLDELGARKVRPDGGRAYYAVGPVDSIAREDLRGPSEKLRRMLDELLVSTDHSGNIAMLRTPPGAAQYLASFIDRVGLKEVVGTIAGDDTVFVLARDPLTGKELGELLSGRTT</sequence>
<accession>O85175</accession>
<accession>Q9R988</accession>
<gene>
    <name type="primary">argR</name>
    <name type="ordered locus">Cgl1399</name>
    <name type="ordered locus">cg1585</name>
</gene>
<protein>
    <recommendedName>
        <fullName>Arginine repressor</fullName>
    </recommendedName>
</protein>
<comment type="function">
    <text evidence="1">Regulates arginine biosynthesis genes.</text>
</comment>
<comment type="pathway">
    <text>Amino-acid biosynthesis; L-arginine biosynthesis [regulation].</text>
</comment>
<comment type="subcellular location">
    <subcellularLocation>
        <location evidence="1">Cytoplasm</location>
    </subcellularLocation>
</comment>
<comment type="similarity">
    <text evidence="2">Belongs to the ArgR family.</text>
</comment>